<reference key="1">
    <citation type="journal article" date="2006" name="PLoS Genet.">
        <title>Genome sequence of Rickettsia bellii illuminates the role of amoebae in gene exchanges between intracellular pathogens.</title>
        <authorList>
            <person name="Ogata H."/>
            <person name="La Scola B."/>
            <person name="Audic S."/>
            <person name="Renesto P."/>
            <person name="Blanc G."/>
            <person name="Robert C."/>
            <person name="Fournier P.-E."/>
            <person name="Claverie J.-M."/>
            <person name="Raoult D."/>
        </authorList>
    </citation>
    <scope>NUCLEOTIDE SEQUENCE [LARGE SCALE GENOMIC DNA]</scope>
    <source>
        <strain>RML369-C</strain>
    </source>
</reference>
<name>YAJC_RICBR</name>
<comment type="function">
    <text evidence="1">The SecYEG-SecDF-YajC-YidC holo-translocon (HTL) protein secretase/insertase is a supercomplex required for protein secretion, insertion of proteins into membranes, and assembly of membrane protein complexes. While the SecYEG complex is essential for assembly of a number of proteins and complexes, the SecDF-YajC-YidC subcomplex facilitates these functions.</text>
</comment>
<comment type="subunit">
    <text evidence="1">Part of the SecDF-YidC-YajC translocase complex. The SecDF-YidC-YajC translocase forms a supercomplex with SecYEG, called the holo-translocon (HTL).</text>
</comment>
<comment type="subcellular location">
    <subcellularLocation>
        <location evidence="1">Cell inner membrane</location>
        <topology evidence="1">Single-pass membrane protein</topology>
    </subcellularLocation>
</comment>
<comment type="similarity">
    <text evidence="4">Belongs to the YajC family.</text>
</comment>
<keyword id="KW-0997">Cell inner membrane</keyword>
<keyword id="KW-1003">Cell membrane</keyword>
<keyword id="KW-0472">Membrane</keyword>
<keyword id="KW-0653">Protein transport</keyword>
<keyword id="KW-0811">Translocation</keyword>
<keyword id="KW-0812">Transmembrane</keyword>
<keyword id="KW-1133">Transmembrane helix</keyword>
<keyword id="KW-0813">Transport</keyword>
<feature type="chain" id="PRO_0000282377" description="Sec translocon accessory complex subunit YajC">
    <location>
        <begin position="1"/>
        <end position="146"/>
    </location>
</feature>
<feature type="transmembrane region" description="Helical" evidence="2">
    <location>
        <begin position="34"/>
        <end position="54"/>
    </location>
</feature>
<feature type="region of interest" description="Disordered" evidence="3">
    <location>
        <begin position="125"/>
        <end position="146"/>
    </location>
</feature>
<feature type="compositionally biased region" description="Basic and acidic residues" evidence="3">
    <location>
        <begin position="125"/>
        <end position="134"/>
    </location>
</feature>
<accession>Q1RIN2</accession>
<dbReference type="EMBL" id="CP000087">
    <property type="protein sequence ID" value="ABE04782.1"/>
    <property type="molecule type" value="Genomic_DNA"/>
</dbReference>
<dbReference type="RefSeq" id="WP_011477369.1">
    <property type="nucleotide sequence ID" value="NC_007940.1"/>
</dbReference>
<dbReference type="SMR" id="Q1RIN2"/>
<dbReference type="KEGG" id="rbe:RBE_0701"/>
<dbReference type="eggNOG" id="COG1862">
    <property type="taxonomic scope" value="Bacteria"/>
</dbReference>
<dbReference type="HOGENOM" id="CLU_116157_0_0_5"/>
<dbReference type="OrthoDB" id="9811406at2"/>
<dbReference type="Proteomes" id="UP000001951">
    <property type="component" value="Chromosome"/>
</dbReference>
<dbReference type="GO" id="GO:0005886">
    <property type="term" value="C:plasma membrane"/>
    <property type="evidence" value="ECO:0007669"/>
    <property type="project" value="UniProtKB-SubCell"/>
</dbReference>
<dbReference type="GO" id="GO:0015031">
    <property type="term" value="P:protein transport"/>
    <property type="evidence" value="ECO:0007669"/>
    <property type="project" value="UniProtKB-KW"/>
</dbReference>
<dbReference type="InterPro" id="IPR003849">
    <property type="entry name" value="Preprotein_translocase_YajC"/>
</dbReference>
<dbReference type="NCBIfam" id="TIGR00739">
    <property type="entry name" value="yajC"/>
    <property type="match status" value="1"/>
</dbReference>
<dbReference type="PANTHER" id="PTHR33909">
    <property type="entry name" value="SEC TRANSLOCON ACCESSORY COMPLEX SUBUNIT YAJC"/>
    <property type="match status" value="1"/>
</dbReference>
<dbReference type="PANTHER" id="PTHR33909:SF1">
    <property type="entry name" value="SEC TRANSLOCON ACCESSORY COMPLEX SUBUNIT YAJC"/>
    <property type="match status" value="1"/>
</dbReference>
<dbReference type="Pfam" id="PF02699">
    <property type="entry name" value="YajC"/>
    <property type="match status" value="1"/>
</dbReference>
<dbReference type="PRINTS" id="PR01853">
    <property type="entry name" value="YAJCTRNLCASE"/>
</dbReference>
<dbReference type="SMART" id="SM01323">
    <property type="entry name" value="YajC"/>
    <property type="match status" value="1"/>
</dbReference>
<evidence type="ECO:0000250" key="1">
    <source>
        <dbReference type="UniProtKB" id="P0ADZ7"/>
    </source>
</evidence>
<evidence type="ECO:0000255" key="2"/>
<evidence type="ECO:0000256" key="3">
    <source>
        <dbReference type="SAM" id="MobiDB-lite"/>
    </source>
</evidence>
<evidence type="ECO:0000305" key="4"/>
<sequence length="146" mass="16182">MSTNGQDSNANNNDTIEIQETEVVPVETTNSLQSGLTSLIPMVLIFAVFYFLLLRPQEKRRKEREKLVSEVKKGEEVLTNSGIYGIVTKVSESEPNIEVEIAKDVRIKALKSAIVDITSRSKDVAVKKEDSKNNKKDKKVSGAKSS</sequence>
<protein>
    <recommendedName>
        <fullName>Sec translocon accessory complex subunit YajC</fullName>
    </recommendedName>
</protein>
<organism>
    <name type="scientific">Rickettsia bellii (strain RML369-C)</name>
    <dbReference type="NCBI Taxonomy" id="336407"/>
    <lineage>
        <taxon>Bacteria</taxon>
        <taxon>Pseudomonadati</taxon>
        <taxon>Pseudomonadota</taxon>
        <taxon>Alphaproteobacteria</taxon>
        <taxon>Rickettsiales</taxon>
        <taxon>Rickettsiaceae</taxon>
        <taxon>Rickettsieae</taxon>
        <taxon>Rickettsia</taxon>
        <taxon>belli group</taxon>
    </lineage>
</organism>
<gene>
    <name type="primary">yajC</name>
    <name type="ordered locus">RBE_0701</name>
</gene>
<proteinExistence type="inferred from homology"/>